<keyword id="KW-0997">Cell inner membrane</keyword>
<keyword id="KW-1003">Cell membrane</keyword>
<keyword id="KW-0472">Membrane</keyword>
<keyword id="KW-0520">NAD</keyword>
<keyword id="KW-0874">Quinone</keyword>
<keyword id="KW-1185">Reference proteome</keyword>
<keyword id="KW-1278">Translocase</keyword>
<keyword id="KW-0812">Transmembrane</keyword>
<keyword id="KW-1133">Transmembrane helix</keyword>
<keyword id="KW-0813">Transport</keyword>
<keyword id="KW-0830">Ubiquinone</keyword>
<comment type="function">
    <text evidence="1">NDH-1 shuttles electrons from NADH, via FMN and iron-sulfur (Fe-S) centers, to quinones in the respiratory chain. The immediate electron acceptor for the enzyme in this species is believed to be ubiquinone. Couples the redox reaction to proton translocation (for every two electrons transferred, four hydrogen ions are translocated across the cytoplasmic membrane), and thus conserves the redox energy in a proton gradient.</text>
</comment>
<comment type="catalytic activity">
    <reaction evidence="1">
        <text>a quinone + NADH + 5 H(+)(in) = a quinol + NAD(+) + 4 H(+)(out)</text>
        <dbReference type="Rhea" id="RHEA:57888"/>
        <dbReference type="ChEBI" id="CHEBI:15378"/>
        <dbReference type="ChEBI" id="CHEBI:24646"/>
        <dbReference type="ChEBI" id="CHEBI:57540"/>
        <dbReference type="ChEBI" id="CHEBI:57945"/>
        <dbReference type="ChEBI" id="CHEBI:132124"/>
    </reaction>
</comment>
<comment type="subunit">
    <text evidence="1">NDH-1 is composed of 14 different subunits. Subunits NuoA, H, J, K, L, M, N constitute the membrane sector of the complex.</text>
</comment>
<comment type="subcellular location">
    <subcellularLocation>
        <location evidence="1">Cell inner membrane</location>
        <topology evidence="1">Multi-pass membrane protein</topology>
    </subcellularLocation>
</comment>
<comment type="similarity">
    <text evidence="1">Belongs to the complex I subunit 4L family.</text>
</comment>
<sequence length="110" mass="12064">MRALKMNSISVSVTHGLIFSTLLFVISVAGIIINRRNILILLMSIELMLLAVNTNFLIFANMHQQAMGGVFVFFIMAVAAAETAIGLAIVVAIFRKRKTIDLSKLNTLRG</sequence>
<gene>
    <name evidence="1" type="primary">nuoK</name>
    <name type="ordered locus">FTT_0041</name>
</gene>
<reference key="1">
    <citation type="journal article" date="2005" name="Nat. Genet.">
        <title>The complete genome sequence of Francisella tularensis, the causative agent of tularemia.</title>
        <authorList>
            <person name="Larsson P."/>
            <person name="Oyston P.C.F."/>
            <person name="Chain P."/>
            <person name="Chu M.C."/>
            <person name="Duffield M."/>
            <person name="Fuxelius H.-H."/>
            <person name="Garcia E."/>
            <person name="Haelltorp G."/>
            <person name="Johansson D."/>
            <person name="Isherwood K.E."/>
            <person name="Karp P.D."/>
            <person name="Larsson E."/>
            <person name="Liu Y."/>
            <person name="Michell S."/>
            <person name="Prior J."/>
            <person name="Prior R."/>
            <person name="Malfatti S."/>
            <person name="Sjoestedt A."/>
            <person name="Svensson K."/>
            <person name="Thompson N."/>
            <person name="Vergez L."/>
            <person name="Wagg J.K."/>
            <person name="Wren B.W."/>
            <person name="Lindler L.E."/>
            <person name="Andersson S.G.E."/>
            <person name="Forsman M."/>
            <person name="Titball R.W."/>
        </authorList>
    </citation>
    <scope>NUCLEOTIDE SEQUENCE [LARGE SCALE GENOMIC DNA]</scope>
    <source>
        <strain>SCHU S4 / Schu 4</strain>
    </source>
</reference>
<accession>Q5NIM5</accession>
<dbReference type="EC" id="7.1.1.-" evidence="1"/>
<dbReference type="EMBL" id="AJ749949">
    <property type="protein sequence ID" value="CAG44674.1"/>
    <property type="molecule type" value="Genomic_DNA"/>
</dbReference>
<dbReference type="RefSeq" id="WP_003022907.1">
    <property type="nucleotide sequence ID" value="NZ_CP010290.1"/>
</dbReference>
<dbReference type="RefSeq" id="YP_169117.1">
    <property type="nucleotide sequence ID" value="NC_006570.2"/>
</dbReference>
<dbReference type="SMR" id="Q5NIM5"/>
<dbReference type="STRING" id="177416.FTT_0041"/>
<dbReference type="DNASU" id="3191853"/>
<dbReference type="EnsemblBacteria" id="CAG44674">
    <property type="protein sequence ID" value="CAG44674"/>
    <property type="gene ID" value="FTT_0041"/>
</dbReference>
<dbReference type="GeneID" id="75264599"/>
<dbReference type="KEGG" id="ftu:FTT_0041"/>
<dbReference type="PATRIC" id="fig|177416.18.peg.44"/>
<dbReference type="eggNOG" id="COG0713">
    <property type="taxonomic scope" value="Bacteria"/>
</dbReference>
<dbReference type="OrthoDB" id="9801357at2"/>
<dbReference type="Proteomes" id="UP000001174">
    <property type="component" value="Chromosome"/>
</dbReference>
<dbReference type="GO" id="GO:0030964">
    <property type="term" value="C:NADH dehydrogenase complex"/>
    <property type="evidence" value="ECO:0007669"/>
    <property type="project" value="TreeGrafter"/>
</dbReference>
<dbReference type="GO" id="GO:0005886">
    <property type="term" value="C:plasma membrane"/>
    <property type="evidence" value="ECO:0007669"/>
    <property type="project" value="UniProtKB-SubCell"/>
</dbReference>
<dbReference type="GO" id="GO:0050136">
    <property type="term" value="F:NADH:ubiquinone reductase (non-electrogenic) activity"/>
    <property type="evidence" value="ECO:0007669"/>
    <property type="project" value="UniProtKB-UniRule"/>
</dbReference>
<dbReference type="GO" id="GO:0048038">
    <property type="term" value="F:quinone binding"/>
    <property type="evidence" value="ECO:0007669"/>
    <property type="project" value="UniProtKB-KW"/>
</dbReference>
<dbReference type="GO" id="GO:0042773">
    <property type="term" value="P:ATP synthesis coupled electron transport"/>
    <property type="evidence" value="ECO:0007669"/>
    <property type="project" value="InterPro"/>
</dbReference>
<dbReference type="FunFam" id="1.10.287.3510:FF:000001">
    <property type="entry name" value="NADH-quinone oxidoreductase subunit K"/>
    <property type="match status" value="1"/>
</dbReference>
<dbReference type="Gene3D" id="1.10.287.3510">
    <property type="match status" value="1"/>
</dbReference>
<dbReference type="HAMAP" id="MF_01456">
    <property type="entry name" value="NDH1_NuoK"/>
    <property type="match status" value="1"/>
</dbReference>
<dbReference type="InterPro" id="IPR001133">
    <property type="entry name" value="NADH_UbQ_OxRdtase_chain4L/K"/>
</dbReference>
<dbReference type="InterPro" id="IPR039428">
    <property type="entry name" value="NUOK/Mnh_C1-like"/>
</dbReference>
<dbReference type="NCBIfam" id="NF004320">
    <property type="entry name" value="PRK05715.1-2"/>
    <property type="match status" value="1"/>
</dbReference>
<dbReference type="NCBIfam" id="NF004321">
    <property type="entry name" value="PRK05715.1-3"/>
    <property type="match status" value="1"/>
</dbReference>
<dbReference type="NCBIfam" id="NF004323">
    <property type="entry name" value="PRK05715.1-5"/>
    <property type="match status" value="1"/>
</dbReference>
<dbReference type="PANTHER" id="PTHR11434:SF16">
    <property type="entry name" value="NADH-UBIQUINONE OXIDOREDUCTASE CHAIN 4L"/>
    <property type="match status" value="1"/>
</dbReference>
<dbReference type="PANTHER" id="PTHR11434">
    <property type="entry name" value="NADH-UBIQUINONE OXIDOREDUCTASE SUBUNIT ND4L"/>
    <property type="match status" value="1"/>
</dbReference>
<dbReference type="Pfam" id="PF00420">
    <property type="entry name" value="Oxidored_q2"/>
    <property type="match status" value="1"/>
</dbReference>
<evidence type="ECO:0000255" key="1">
    <source>
        <dbReference type="HAMAP-Rule" id="MF_01456"/>
    </source>
</evidence>
<organism>
    <name type="scientific">Francisella tularensis subsp. tularensis (strain SCHU S4 / Schu 4)</name>
    <dbReference type="NCBI Taxonomy" id="177416"/>
    <lineage>
        <taxon>Bacteria</taxon>
        <taxon>Pseudomonadati</taxon>
        <taxon>Pseudomonadota</taxon>
        <taxon>Gammaproteobacteria</taxon>
        <taxon>Thiotrichales</taxon>
        <taxon>Francisellaceae</taxon>
        <taxon>Francisella</taxon>
    </lineage>
</organism>
<proteinExistence type="inferred from homology"/>
<protein>
    <recommendedName>
        <fullName evidence="1">NADH-quinone oxidoreductase subunit K</fullName>
        <ecNumber evidence="1">7.1.1.-</ecNumber>
    </recommendedName>
    <alternativeName>
        <fullName evidence="1">NADH dehydrogenase I subunit K</fullName>
    </alternativeName>
    <alternativeName>
        <fullName evidence="1">NDH-1 subunit K</fullName>
    </alternativeName>
</protein>
<feature type="chain" id="PRO_0000390067" description="NADH-quinone oxidoreductase subunit K">
    <location>
        <begin position="1"/>
        <end position="110"/>
    </location>
</feature>
<feature type="transmembrane region" description="Helical" evidence="1">
    <location>
        <begin position="13"/>
        <end position="33"/>
    </location>
</feature>
<feature type="transmembrane region" description="Helical" evidence="1">
    <location>
        <begin position="38"/>
        <end position="58"/>
    </location>
</feature>
<feature type="transmembrane region" description="Helical" evidence="1">
    <location>
        <begin position="70"/>
        <end position="90"/>
    </location>
</feature>
<name>NUOK_FRATT</name>